<accession>P20308</accession>
<name>KRFA_CHICK</name>
<evidence type="ECO:0000250" key="1"/>
<evidence type="ECO:0000305" key="2"/>
<sequence>MSCYDLCRPSAPTPLANSCNEPCVRQCQDSRVVIQPSPVVVTLPGPILSSFPQNTAVGSSTSAAVGSILSEEGVPISSGGFGISGLGSRFSSRRCLPY</sequence>
<keyword id="KW-0007">Acetylation</keyword>
<keyword id="KW-0416">Keratin</keyword>
<keyword id="KW-1185">Reference proteome</keyword>
<dbReference type="EMBL" id="X17511">
    <property type="protein sequence ID" value="CAA35556.1"/>
    <property type="molecule type" value="Genomic_DNA"/>
</dbReference>
<dbReference type="PIR" id="S06808">
    <property type="entry name" value="S06808"/>
</dbReference>
<dbReference type="VEuPathDB" id="HostDB:LOC428291"/>
<dbReference type="eggNOG" id="ENOG502TDE8">
    <property type="taxonomic scope" value="Eukaryota"/>
</dbReference>
<dbReference type="InParanoid" id="P20308"/>
<dbReference type="PhylomeDB" id="P20308"/>
<dbReference type="Proteomes" id="UP000000539">
    <property type="component" value="Unassembled WGS sequence"/>
</dbReference>
<dbReference type="GO" id="GO:0005882">
    <property type="term" value="C:intermediate filament"/>
    <property type="evidence" value="ECO:0007669"/>
    <property type="project" value="UniProtKB-KW"/>
</dbReference>
<dbReference type="GO" id="GO:0005200">
    <property type="term" value="F:structural constituent of cytoskeleton"/>
    <property type="evidence" value="ECO:0007669"/>
    <property type="project" value="InterPro"/>
</dbReference>
<dbReference type="InterPro" id="IPR003461">
    <property type="entry name" value="Keratin"/>
</dbReference>
<dbReference type="PANTHER" id="PTHR31203">
    <property type="entry name" value="BETA-KERATIN-RELATED PROTEIN-RELATED"/>
    <property type="match status" value="1"/>
</dbReference>
<dbReference type="PANTHER" id="PTHR31203:SF1">
    <property type="entry name" value="BETA-KERATIN-RELATED PROTEIN-RELATED"/>
    <property type="match status" value="1"/>
</dbReference>
<dbReference type="Pfam" id="PF02422">
    <property type="entry name" value="Keratin"/>
    <property type="match status" value="1"/>
</dbReference>
<organism>
    <name type="scientific">Gallus gallus</name>
    <name type="common">Chicken</name>
    <dbReference type="NCBI Taxonomy" id="9031"/>
    <lineage>
        <taxon>Eukaryota</taxon>
        <taxon>Metazoa</taxon>
        <taxon>Chordata</taxon>
        <taxon>Craniata</taxon>
        <taxon>Vertebrata</taxon>
        <taxon>Euteleostomi</taxon>
        <taxon>Archelosauria</taxon>
        <taxon>Archosauria</taxon>
        <taxon>Dinosauria</taxon>
        <taxon>Saurischia</taxon>
        <taxon>Theropoda</taxon>
        <taxon>Coelurosauria</taxon>
        <taxon>Aves</taxon>
        <taxon>Neognathae</taxon>
        <taxon>Galloanserae</taxon>
        <taxon>Galliformes</taxon>
        <taxon>Phasianidae</taxon>
        <taxon>Phasianinae</taxon>
        <taxon>Gallus</taxon>
    </lineage>
</organism>
<comment type="subunit">
    <text>The avian keratins (F-ker, S-ker, C-ker and B-ker) are a complex mixture of very similar polypeptides.</text>
</comment>
<comment type="similarity">
    <text evidence="2">Belongs to the avian keratin family.</text>
</comment>
<protein>
    <recommendedName>
        <fullName>Feather keratin 4</fullName>
    </recommendedName>
    <alternativeName>
        <fullName>F-ker</fullName>
    </alternativeName>
    <alternativeName>
        <fullName>Keratin gene A protein</fullName>
    </alternativeName>
</protein>
<reference key="1">
    <citation type="journal article" date="1989" name="J. Mol. Biol.">
        <title>Avian keratin genes. I. A molecular analysis of the structure and expression of a group of feather keratin genes.</title>
        <authorList>
            <person name="Presland R.B."/>
            <person name="Gregg K."/>
            <person name="Molloy P.L."/>
            <person name="Morris C.P."/>
            <person name="Crocker L.A."/>
            <person name="Rogers G.E."/>
        </authorList>
    </citation>
    <scope>NUCLEOTIDE SEQUENCE [GENOMIC DNA]</scope>
</reference>
<feature type="initiator methionine" description="Removed" evidence="1">
    <location>
        <position position="1"/>
    </location>
</feature>
<feature type="chain" id="PRO_0000096997" description="Feather keratin 4">
    <location>
        <begin position="2"/>
        <end position="98"/>
    </location>
</feature>
<feature type="modified residue" description="N-acetylserine" evidence="1">
    <location>
        <position position="2"/>
    </location>
</feature>
<proteinExistence type="inferred from homology"/>